<protein>
    <recommendedName>
        <fullName>S-adenosylmethionine synthase isoform type-2</fullName>
        <shortName>AdoMet synthase 2</shortName>
        <ecNumber evidence="2 4 5">2.5.1.6</ecNumber>
    </recommendedName>
    <alternativeName>
        <fullName>Methionine adenosyltransferase 2</fullName>
        <shortName evidence="10">MAT 2</shortName>
    </alternativeName>
    <alternativeName>
        <fullName>Methionine adenosyltransferase II</fullName>
        <shortName>MAT-II</shortName>
    </alternativeName>
</protein>
<accession>P31153</accession>
<accession>A8K511</accession>
<accession>B4DN45</accession>
<accession>D6W5L1</accession>
<accession>Q53SP5</accession>
<name>METK2_HUMAN</name>
<organism>
    <name type="scientific">Homo sapiens</name>
    <name type="common">Human</name>
    <dbReference type="NCBI Taxonomy" id="9606"/>
    <lineage>
        <taxon>Eukaryota</taxon>
        <taxon>Metazoa</taxon>
        <taxon>Chordata</taxon>
        <taxon>Craniata</taxon>
        <taxon>Vertebrata</taxon>
        <taxon>Euteleostomi</taxon>
        <taxon>Mammalia</taxon>
        <taxon>Eutheria</taxon>
        <taxon>Euarchontoglires</taxon>
        <taxon>Primates</taxon>
        <taxon>Haplorrhini</taxon>
        <taxon>Catarrhini</taxon>
        <taxon>Hominidae</taxon>
        <taxon>Homo</taxon>
    </lineage>
</organism>
<feature type="chain" id="PRO_0000174435" description="S-adenosylmethionine synthase isoform type-2">
    <location>
        <begin position="1"/>
        <end position="395"/>
    </location>
</feature>
<feature type="region of interest" description="Flexible loop" evidence="1">
    <location>
        <begin position="113"/>
        <end position="125"/>
    </location>
</feature>
<feature type="binding site" description="in other chain" evidence="14 15 17 18">
    <location>
        <position position="29"/>
    </location>
    <ligand>
        <name>ATP</name>
        <dbReference type="ChEBI" id="CHEBI:30616"/>
        <note>ligand shared between two neighboring subunits</note>
    </ligand>
</feature>
<feature type="binding site" evidence="14 15 16 17 18 19 20">
    <location>
        <position position="31"/>
    </location>
    <ligand>
        <name>Mg(2+)</name>
        <dbReference type="ChEBI" id="CHEBI:18420"/>
    </ligand>
</feature>
<feature type="binding site" evidence="1">
    <location>
        <position position="57"/>
    </location>
    <ligand>
        <name>K(+)</name>
        <dbReference type="ChEBI" id="CHEBI:29103"/>
    </ligand>
</feature>
<feature type="binding site" description="in other chain" evidence="14 17">
    <location>
        <position position="70"/>
    </location>
    <ligand>
        <name>L-methionine</name>
        <dbReference type="ChEBI" id="CHEBI:57844"/>
        <note>ligand shared between two neighboring subunits</note>
    </ligand>
</feature>
<feature type="binding site" description="in other chain" evidence="14">
    <location>
        <position position="113"/>
    </location>
    <ligand>
        <name>L-methionine</name>
        <dbReference type="ChEBI" id="CHEBI:57844"/>
        <note>ligand shared between two neighboring subunits</note>
    </ligand>
</feature>
<feature type="binding site" description="in other chain" evidence="14 15 16 17 18 19 20">
    <location>
        <begin position="179"/>
        <end position="181"/>
    </location>
    <ligand>
        <name>ATP</name>
        <dbReference type="ChEBI" id="CHEBI:30616"/>
        <note>ligand shared between two neighboring subunits</note>
    </ligand>
</feature>
<feature type="binding site" description="in other chain" evidence="14 15 16 17 19 20">
    <location>
        <begin position="247"/>
        <end position="250"/>
    </location>
    <ligand>
        <name>ATP</name>
        <dbReference type="ChEBI" id="CHEBI:30616"/>
        <note>ligand shared between two neighboring subunits</note>
    </ligand>
</feature>
<feature type="binding site" description="in other chain" evidence="14 15 16 18 19 20">
    <location>
        <position position="258"/>
    </location>
    <ligand>
        <name>ATP</name>
        <dbReference type="ChEBI" id="CHEBI:30616"/>
        <note>ligand shared between two neighboring subunits</note>
    </ligand>
</feature>
<feature type="binding site" evidence="14 15 17 20">
    <location>
        <position position="258"/>
    </location>
    <ligand>
        <name>L-methionine</name>
        <dbReference type="ChEBI" id="CHEBI:57844"/>
        <note>ligand shared between two neighboring subunits</note>
    </ligand>
</feature>
<feature type="binding site" description="in other chain" evidence="14 15 17 18">
    <location>
        <begin position="264"/>
        <end position="265"/>
    </location>
    <ligand>
        <name>ATP</name>
        <dbReference type="ChEBI" id="CHEBI:30616"/>
        <note>ligand shared between two neighboring subunits</note>
    </ligand>
</feature>
<feature type="binding site" evidence="14 17">
    <location>
        <position position="281"/>
    </location>
    <ligand>
        <name>ATP</name>
        <dbReference type="ChEBI" id="CHEBI:30616"/>
        <note>ligand shared between two neighboring subunits</note>
    </ligand>
</feature>
<feature type="binding site" evidence="14 15 17">
    <location>
        <position position="285"/>
    </location>
    <ligand>
        <name>ATP</name>
        <dbReference type="ChEBI" id="CHEBI:30616"/>
        <note>ligand shared between two neighboring subunits</note>
    </ligand>
</feature>
<feature type="binding site" description="in other chain" evidence="1">
    <location>
        <position position="289"/>
    </location>
    <ligand>
        <name>L-methionine</name>
        <dbReference type="ChEBI" id="CHEBI:57844"/>
        <note>ligand shared between two neighboring subunits</note>
    </ligand>
</feature>
<feature type="binding site" evidence="14 15 17">
    <location>
        <position position="291"/>
    </location>
    <ligand>
        <name>ATP</name>
        <dbReference type="ChEBI" id="CHEBI:30616"/>
        <note>ligand shared between two neighboring subunits</note>
    </ligand>
</feature>
<feature type="modified residue" description="N6-acetyllysine" evidence="22">
    <location>
        <position position="81"/>
    </location>
</feature>
<feature type="modified residue" description="Phosphoserine" evidence="21">
    <location>
        <position position="114"/>
    </location>
</feature>
<feature type="modified residue" description="Phosphoserine" evidence="23">
    <location>
        <position position="384"/>
    </location>
</feature>
<feature type="cross-link" description="Glycyl lysine isopeptide (Lys-Gly) (interchain with G-Cter in SUMO2)" evidence="24">
    <location>
        <position position="228"/>
    </location>
</feature>
<feature type="cross-link" description="Glycyl lysine isopeptide (Lys-Gly) (interchain with G-Cter in SUMO2)" evidence="24">
    <location>
        <position position="234"/>
    </location>
</feature>
<feature type="splice variant" id="VSP_056186" description="In isoform 2." evidence="11">
    <location>
        <begin position="1"/>
        <end position="63"/>
    </location>
</feature>
<feature type="splice variant" id="VSP_056187" description="In isoform 2." evidence="11">
    <location>
        <begin position="363"/>
        <end position="395"/>
    </location>
</feature>
<feature type="helix" evidence="31">
    <location>
        <begin position="9"/>
        <end position="16"/>
    </location>
</feature>
<feature type="strand" evidence="30">
    <location>
        <begin position="17"/>
        <end position="25"/>
    </location>
</feature>
<feature type="helix" evidence="30">
    <location>
        <begin position="30"/>
        <end position="48"/>
    </location>
</feature>
<feature type="strand" evidence="30">
    <location>
        <begin position="53"/>
        <end position="61"/>
    </location>
</feature>
<feature type="strand" evidence="30">
    <location>
        <begin position="64"/>
        <end position="72"/>
    </location>
</feature>
<feature type="helix" evidence="30">
    <location>
        <begin position="79"/>
        <end position="90"/>
    </location>
</feature>
<feature type="helix" evidence="30">
    <location>
        <begin position="95"/>
        <end position="97"/>
    </location>
</feature>
<feature type="turn" evidence="30">
    <location>
        <begin position="101"/>
        <end position="103"/>
    </location>
</feature>
<feature type="strand" evidence="30">
    <location>
        <begin position="104"/>
        <end position="111"/>
    </location>
</feature>
<feature type="helix" evidence="30">
    <location>
        <begin position="115"/>
        <end position="121"/>
    </location>
</feature>
<feature type="turn" evidence="30">
    <location>
        <begin position="122"/>
        <end position="124"/>
    </location>
</feature>
<feature type="helix" evidence="30">
    <location>
        <begin position="127"/>
        <end position="129"/>
    </location>
</feature>
<feature type="strand" evidence="30">
    <location>
        <begin position="132"/>
        <end position="134"/>
    </location>
</feature>
<feature type="strand" evidence="30">
    <location>
        <begin position="136"/>
        <end position="143"/>
    </location>
</feature>
<feature type="helix" evidence="30">
    <location>
        <begin position="152"/>
        <end position="169"/>
    </location>
</feature>
<feature type="strand" evidence="25">
    <location>
        <begin position="171"/>
        <end position="173"/>
    </location>
</feature>
<feature type="strand" evidence="30">
    <location>
        <begin position="176"/>
        <end position="191"/>
    </location>
</feature>
<feature type="strand" evidence="30">
    <location>
        <begin position="194"/>
        <end position="209"/>
    </location>
</feature>
<feature type="strand" evidence="28">
    <location>
        <begin position="211"/>
        <end position="213"/>
    </location>
</feature>
<feature type="helix" evidence="30">
    <location>
        <begin position="215"/>
        <end position="224"/>
    </location>
</feature>
<feature type="helix" evidence="30">
    <location>
        <begin position="227"/>
        <end position="230"/>
    </location>
</feature>
<feature type="helix" evidence="30">
    <location>
        <begin position="233"/>
        <end position="235"/>
    </location>
</feature>
<feature type="strand" evidence="30">
    <location>
        <begin position="241"/>
        <end position="245"/>
    </location>
</feature>
<feature type="helix" evidence="30">
    <location>
        <begin position="254"/>
        <end position="257"/>
    </location>
</feature>
<feature type="strand" evidence="27">
    <location>
        <begin position="259"/>
        <end position="261"/>
    </location>
</feature>
<feature type="turn" evidence="30">
    <location>
        <begin position="266"/>
        <end position="273"/>
    </location>
</feature>
<feature type="helix" evidence="30">
    <location>
        <begin position="290"/>
        <end position="307"/>
    </location>
</feature>
<feature type="strand" evidence="30">
    <location>
        <begin position="312"/>
        <end position="320"/>
    </location>
</feature>
<feature type="strand" evidence="30">
    <location>
        <begin position="328"/>
        <end position="333"/>
    </location>
</feature>
<feature type="strand" evidence="29">
    <location>
        <begin position="338"/>
        <end position="340"/>
    </location>
</feature>
<feature type="helix" evidence="30">
    <location>
        <begin position="342"/>
        <end position="352"/>
    </location>
</feature>
<feature type="helix" evidence="30">
    <location>
        <begin position="357"/>
        <end position="364"/>
    </location>
</feature>
<feature type="turn" evidence="30">
    <location>
        <begin position="365"/>
        <end position="367"/>
    </location>
</feature>
<feature type="helix" evidence="30">
    <location>
        <begin position="371"/>
        <end position="374"/>
    </location>
</feature>
<feature type="strand" evidence="30">
    <location>
        <begin position="375"/>
        <end position="377"/>
    </location>
</feature>
<feature type="strand" evidence="30">
    <location>
        <begin position="379"/>
        <end position="382"/>
    </location>
</feature>
<feature type="strand" evidence="26">
    <location>
        <begin position="383"/>
        <end position="385"/>
    </location>
</feature>
<feature type="helix" evidence="30">
    <location>
        <begin position="386"/>
        <end position="388"/>
    </location>
</feature>
<gene>
    <name type="primary">MAT2A</name>
    <name type="synonym">AMS2</name>
    <name type="synonym">MATA2</name>
</gene>
<reference key="1">
    <citation type="journal article" date="1992" name="FEBS Lett.">
        <title>Molecular cloning and developmental expression of a human kidney S-adenosylmethionine synthetase.</title>
        <authorList>
            <person name="Horikawa S."/>
            <person name="Tsukada K."/>
        </authorList>
    </citation>
    <scope>NUCLEOTIDE SEQUENCE [MRNA] (ISOFORM 1)</scope>
    <scope>TISSUE SPECIFICITY</scope>
    <source>
        <tissue>Kidney</tissue>
    </source>
</reference>
<reference key="2">
    <citation type="journal article" date="2006" name="Free Radic. Biol. Med.">
        <title>Activation of a novel isoform of methionine adenosyl transferase 2A and increased S-adenosylmethionine turnover in lung epithelial cells exposed to hyperoxia.</title>
        <authorList>
            <person name="Panayiotidis M.I."/>
            <person name="Stabler S.P."/>
            <person name="Ahmad A."/>
            <person name="Pappa A."/>
            <person name="Legros L.H. Jr."/>
            <person name="Hernandez-Saavedra D."/>
            <person name="Schneider B.K."/>
            <person name="Allen R.H."/>
            <person name="Vasiliou V."/>
            <person name="McCord J.M."/>
            <person name="Kotb M."/>
            <person name="White C.W."/>
        </authorList>
    </citation>
    <scope>NUCLEOTIDE SEQUENCE [MRNA] (ISOFORM 1)</scope>
    <source>
        <tissue>Lung</tissue>
    </source>
</reference>
<reference key="3">
    <citation type="journal article" date="2004" name="Nat. Genet.">
        <title>Complete sequencing and characterization of 21,243 full-length human cDNAs.</title>
        <authorList>
            <person name="Ota T."/>
            <person name="Suzuki Y."/>
            <person name="Nishikawa T."/>
            <person name="Otsuki T."/>
            <person name="Sugiyama T."/>
            <person name="Irie R."/>
            <person name="Wakamatsu A."/>
            <person name="Hayashi K."/>
            <person name="Sato H."/>
            <person name="Nagai K."/>
            <person name="Kimura K."/>
            <person name="Makita H."/>
            <person name="Sekine M."/>
            <person name="Obayashi M."/>
            <person name="Nishi T."/>
            <person name="Shibahara T."/>
            <person name="Tanaka T."/>
            <person name="Ishii S."/>
            <person name="Yamamoto J."/>
            <person name="Saito K."/>
            <person name="Kawai Y."/>
            <person name="Isono Y."/>
            <person name="Nakamura Y."/>
            <person name="Nagahari K."/>
            <person name="Murakami K."/>
            <person name="Yasuda T."/>
            <person name="Iwayanagi T."/>
            <person name="Wagatsuma M."/>
            <person name="Shiratori A."/>
            <person name="Sudo H."/>
            <person name="Hosoiri T."/>
            <person name="Kaku Y."/>
            <person name="Kodaira H."/>
            <person name="Kondo H."/>
            <person name="Sugawara M."/>
            <person name="Takahashi M."/>
            <person name="Kanda K."/>
            <person name="Yokoi T."/>
            <person name="Furuya T."/>
            <person name="Kikkawa E."/>
            <person name="Omura Y."/>
            <person name="Abe K."/>
            <person name="Kamihara K."/>
            <person name="Katsuta N."/>
            <person name="Sato K."/>
            <person name="Tanikawa M."/>
            <person name="Yamazaki M."/>
            <person name="Ninomiya K."/>
            <person name="Ishibashi T."/>
            <person name="Yamashita H."/>
            <person name="Murakawa K."/>
            <person name="Fujimori K."/>
            <person name="Tanai H."/>
            <person name="Kimata M."/>
            <person name="Watanabe M."/>
            <person name="Hiraoka S."/>
            <person name="Chiba Y."/>
            <person name="Ishida S."/>
            <person name="Ono Y."/>
            <person name="Takiguchi S."/>
            <person name="Watanabe S."/>
            <person name="Yosida M."/>
            <person name="Hotuta T."/>
            <person name="Kusano J."/>
            <person name="Kanehori K."/>
            <person name="Takahashi-Fujii A."/>
            <person name="Hara H."/>
            <person name="Tanase T.-O."/>
            <person name="Nomura Y."/>
            <person name="Togiya S."/>
            <person name="Komai F."/>
            <person name="Hara R."/>
            <person name="Takeuchi K."/>
            <person name="Arita M."/>
            <person name="Imose N."/>
            <person name="Musashino K."/>
            <person name="Yuuki H."/>
            <person name="Oshima A."/>
            <person name="Sasaki N."/>
            <person name="Aotsuka S."/>
            <person name="Yoshikawa Y."/>
            <person name="Matsunawa H."/>
            <person name="Ichihara T."/>
            <person name="Shiohata N."/>
            <person name="Sano S."/>
            <person name="Moriya S."/>
            <person name="Momiyama H."/>
            <person name="Satoh N."/>
            <person name="Takami S."/>
            <person name="Terashima Y."/>
            <person name="Suzuki O."/>
            <person name="Nakagawa S."/>
            <person name="Senoh A."/>
            <person name="Mizoguchi H."/>
            <person name="Goto Y."/>
            <person name="Shimizu F."/>
            <person name="Wakebe H."/>
            <person name="Hishigaki H."/>
            <person name="Watanabe T."/>
            <person name="Sugiyama A."/>
            <person name="Takemoto M."/>
            <person name="Kawakami B."/>
            <person name="Yamazaki M."/>
            <person name="Watanabe K."/>
            <person name="Kumagai A."/>
            <person name="Itakura S."/>
            <person name="Fukuzumi Y."/>
            <person name="Fujimori Y."/>
            <person name="Komiyama M."/>
            <person name="Tashiro H."/>
            <person name="Tanigami A."/>
            <person name="Fujiwara T."/>
            <person name="Ono T."/>
            <person name="Yamada K."/>
            <person name="Fujii Y."/>
            <person name="Ozaki K."/>
            <person name="Hirao M."/>
            <person name="Ohmori Y."/>
            <person name="Kawabata A."/>
            <person name="Hikiji T."/>
            <person name="Kobatake N."/>
            <person name="Inagaki H."/>
            <person name="Ikema Y."/>
            <person name="Okamoto S."/>
            <person name="Okitani R."/>
            <person name="Kawakami T."/>
            <person name="Noguchi S."/>
            <person name="Itoh T."/>
            <person name="Shigeta K."/>
            <person name="Senba T."/>
            <person name="Matsumura K."/>
            <person name="Nakajima Y."/>
            <person name="Mizuno T."/>
            <person name="Morinaga M."/>
            <person name="Sasaki M."/>
            <person name="Togashi T."/>
            <person name="Oyama M."/>
            <person name="Hata H."/>
            <person name="Watanabe M."/>
            <person name="Komatsu T."/>
            <person name="Mizushima-Sugano J."/>
            <person name="Satoh T."/>
            <person name="Shirai Y."/>
            <person name="Takahashi Y."/>
            <person name="Nakagawa K."/>
            <person name="Okumura K."/>
            <person name="Nagase T."/>
            <person name="Nomura N."/>
            <person name="Kikuchi H."/>
            <person name="Masuho Y."/>
            <person name="Yamashita R."/>
            <person name="Nakai K."/>
            <person name="Yada T."/>
            <person name="Nakamura Y."/>
            <person name="Ohara O."/>
            <person name="Isogai T."/>
            <person name="Sugano S."/>
        </authorList>
    </citation>
    <scope>NUCLEOTIDE SEQUENCE [LARGE SCALE MRNA] (ISOFORMS 1 AND 2)</scope>
    <source>
        <tissue>Testis</tissue>
    </source>
</reference>
<reference key="4">
    <citation type="journal article" date="2005" name="Nature">
        <title>Generation and annotation of the DNA sequences of human chromosomes 2 and 4.</title>
        <authorList>
            <person name="Hillier L.W."/>
            <person name="Graves T.A."/>
            <person name="Fulton R.S."/>
            <person name="Fulton L.A."/>
            <person name="Pepin K.H."/>
            <person name="Minx P."/>
            <person name="Wagner-McPherson C."/>
            <person name="Layman D."/>
            <person name="Wylie K."/>
            <person name="Sekhon M."/>
            <person name="Becker M.C."/>
            <person name="Fewell G.A."/>
            <person name="Delehaunty K.D."/>
            <person name="Miner T.L."/>
            <person name="Nash W.E."/>
            <person name="Kremitzki C."/>
            <person name="Oddy L."/>
            <person name="Du H."/>
            <person name="Sun H."/>
            <person name="Bradshaw-Cordum H."/>
            <person name="Ali J."/>
            <person name="Carter J."/>
            <person name="Cordes M."/>
            <person name="Harris A."/>
            <person name="Isak A."/>
            <person name="van Brunt A."/>
            <person name="Nguyen C."/>
            <person name="Du F."/>
            <person name="Courtney L."/>
            <person name="Kalicki J."/>
            <person name="Ozersky P."/>
            <person name="Abbott S."/>
            <person name="Armstrong J."/>
            <person name="Belter E.A."/>
            <person name="Caruso L."/>
            <person name="Cedroni M."/>
            <person name="Cotton M."/>
            <person name="Davidson T."/>
            <person name="Desai A."/>
            <person name="Elliott G."/>
            <person name="Erb T."/>
            <person name="Fronick C."/>
            <person name="Gaige T."/>
            <person name="Haakenson W."/>
            <person name="Haglund K."/>
            <person name="Holmes A."/>
            <person name="Harkins R."/>
            <person name="Kim K."/>
            <person name="Kruchowski S.S."/>
            <person name="Strong C.M."/>
            <person name="Grewal N."/>
            <person name="Goyea E."/>
            <person name="Hou S."/>
            <person name="Levy A."/>
            <person name="Martinka S."/>
            <person name="Mead K."/>
            <person name="McLellan M.D."/>
            <person name="Meyer R."/>
            <person name="Randall-Maher J."/>
            <person name="Tomlinson C."/>
            <person name="Dauphin-Kohlberg S."/>
            <person name="Kozlowicz-Reilly A."/>
            <person name="Shah N."/>
            <person name="Swearengen-Shahid S."/>
            <person name="Snider J."/>
            <person name="Strong J.T."/>
            <person name="Thompson J."/>
            <person name="Yoakum M."/>
            <person name="Leonard S."/>
            <person name="Pearman C."/>
            <person name="Trani L."/>
            <person name="Radionenko M."/>
            <person name="Waligorski J.E."/>
            <person name="Wang C."/>
            <person name="Rock S.M."/>
            <person name="Tin-Wollam A.-M."/>
            <person name="Maupin R."/>
            <person name="Latreille P."/>
            <person name="Wendl M.C."/>
            <person name="Yang S.-P."/>
            <person name="Pohl C."/>
            <person name="Wallis J.W."/>
            <person name="Spieth J."/>
            <person name="Bieri T.A."/>
            <person name="Berkowicz N."/>
            <person name="Nelson J.O."/>
            <person name="Osborne J."/>
            <person name="Ding L."/>
            <person name="Meyer R."/>
            <person name="Sabo A."/>
            <person name="Shotland Y."/>
            <person name="Sinha P."/>
            <person name="Wohldmann P.E."/>
            <person name="Cook L.L."/>
            <person name="Hickenbotham M.T."/>
            <person name="Eldred J."/>
            <person name="Williams D."/>
            <person name="Jones T.A."/>
            <person name="She X."/>
            <person name="Ciccarelli F.D."/>
            <person name="Izaurralde E."/>
            <person name="Taylor J."/>
            <person name="Schmutz J."/>
            <person name="Myers R.M."/>
            <person name="Cox D.R."/>
            <person name="Huang X."/>
            <person name="McPherson J.D."/>
            <person name="Mardis E.R."/>
            <person name="Clifton S.W."/>
            <person name="Warren W.C."/>
            <person name="Chinwalla A.T."/>
            <person name="Eddy S.R."/>
            <person name="Marra M.A."/>
            <person name="Ovcharenko I."/>
            <person name="Furey T.S."/>
            <person name="Miller W."/>
            <person name="Eichler E.E."/>
            <person name="Bork P."/>
            <person name="Suyama M."/>
            <person name="Torrents D."/>
            <person name="Waterston R.H."/>
            <person name="Wilson R.K."/>
        </authorList>
    </citation>
    <scope>NUCLEOTIDE SEQUENCE [LARGE SCALE GENOMIC DNA]</scope>
</reference>
<reference key="5">
    <citation type="submission" date="2005-09" db="EMBL/GenBank/DDBJ databases">
        <authorList>
            <person name="Mural R.J."/>
            <person name="Istrail S."/>
            <person name="Sutton G.G."/>
            <person name="Florea L."/>
            <person name="Halpern A.L."/>
            <person name="Mobarry C.M."/>
            <person name="Lippert R."/>
            <person name="Walenz B."/>
            <person name="Shatkay H."/>
            <person name="Dew I."/>
            <person name="Miller J.R."/>
            <person name="Flanigan M.J."/>
            <person name="Edwards N.J."/>
            <person name="Bolanos R."/>
            <person name="Fasulo D."/>
            <person name="Halldorsson B.V."/>
            <person name="Hannenhalli S."/>
            <person name="Turner R."/>
            <person name="Yooseph S."/>
            <person name="Lu F."/>
            <person name="Nusskern D.R."/>
            <person name="Shue B.C."/>
            <person name="Zheng X.H."/>
            <person name="Zhong F."/>
            <person name="Delcher A.L."/>
            <person name="Huson D.H."/>
            <person name="Kravitz S.A."/>
            <person name="Mouchard L."/>
            <person name="Reinert K."/>
            <person name="Remington K.A."/>
            <person name="Clark A.G."/>
            <person name="Waterman M.S."/>
            <person name="Eichler E.E."/>
            <person name="Adams M.D."/>
            <person name="Hunkapiller M.W."/>
            <person name="Myers E.W."/>
            <person name="Venter J.C."/>
        </authorList>
    </citation>
    <scope>NUCLEOTIDE SEQUENCE [LARGE SCALE GENOMIC DNA]</scope>
</reference>
<reference key="6">
    <citation type="journal article" date="2004" name="Genome Res.">
        <title>The status, quality, and expansion of the NIH full-length cDNA project: the Mammalian Gene Collection (MGC).</title>
        <authorList>
            <consortium name="The MGC Project Team"/>
        </authorList>
    </citation>
    <scope>NUCLEOTIDE SEQUENCE [LARGE SCALE MRNA] (ISOFORM 1)</scope>
    <source>
        <tissue>Muscle</tissue>
    </source>
</reference>
<reference key="7">
    <citation type="journal article" date="2000" name="J. Biol. Chem.">
        <title>Cloning, expression, and functional characterization of the beta regulatory subunit of human methionine adenosyltransferase (MAT II).</title>
        <authorList>
            <person name="LeGros H.L."/>
            <person name="Halim A.-B."/>
            <person name="Geller A.M."/>
            <person name="Kotb M."/>
        </authorList>
    </citation>
    <scope>FUNCTION</scope>
    <scope>CATALYTIC ACTIVITY</scope>
    <scope>SUBUNIT</scope>
    <scope>PATHWAY</scope>
</reference>
<reference key="8">
    <citation type="journal article" date="2008" name="Proc. Natl. Acad. Sci. U.S.A.">
        <title>A quantitative atlas of mitotic phosphorylation.</title>
        <authorList>
            <person name="Dephoure N."/>
            <person name="Zhou C."/>
            <person name="Villen J."/>
            <person name="Beausoleil S.A."/>
            <person name="Bakalarski C.E."/>
            <person name="Elledge S.J."/>
            <person name="Gygi S.P."/>
        </authorList>
    </citation>
    <scope>PHOSPHORYLATION [LARGE SCALE ANALYSIS] AT SER-114</scope>
    <scope>IDENTIFICATION BY MASS SPECTROMETRY [LARGE SCALE ANALYSIS]</scope>
    <source>
        <tissue>Cervix carcinoma</tissue>
    </source>
</reference>
<reference key="9">
    <citation type="journal article" date="2009" name="Science">
        <title>Lysine acetylation targets protein complexes and co-regulates major cellular functions.</title>
        <authorList>
            <person name="Choudhary C."/>
            <person name="Kumar C."/>
            <person name="Gnad F."/>
            <person name="Nielsen M.L."/>
            <person name="Rehman M."/>
            <person name="Walther T.C."/>
            <person name="Olsen J.V."/>
            <person name="Mann M."/>
        </authorList>
    </citation>
    <scope>ACETYLATION [LARGE SCALE ANALYSIS] AT LYS-81</scope>
    <scope>IDENTIFICATION BY MASS SPECTROMETRY [LARGE SCALE ANALYSIS]</scope>
</reference>
<reference key="10">
    <citation type="journal article" date="2011" name="BMC Syst. Biol.">
        <title>Initial characterization of the human central proteome.</title>
        <authorList>
            <person name="Burkard T.R."/>
            <person name="Planyavsky M."/>
            <person name="Kaupe I."/>
            <person name="Breitwieser F.P."/>
            <person name="Buerckstuemmer T."/>
            <person name="Bennett K.L."/>
            <person name="Superti-Furga G."/>
            <person name="Colinge J."/>
        </authorList>
    </citation>
    <scope>IDENTIFICATION BY MASS SPECTROMETRY [LARGE SCALE ANALYSIS]</scope>
</reference>
<reference key="11">
    <citation type="journal article" date="2012" name="PLoS ONE">
        <title>NADP+ binding to the regulatory subunit of methionine adenosyltransferase II increases intersubunit binding affinity in the hetero-trimer.</title>
        <authorList>
            <person name="Gonzalez B."/>
            <person name="Garrido F."/>
            <person name="Ortega R."/>
            <person name="Martinez-Julvez M."/>
            <person name="Revilla-Guarinos A."/>
            <person name="Perez-Pertejo Y."/>
            <person name="Velazquez-Campoy A."/>
            <person name="Sanz-Aparicio J."/>
            <person name="Pajares M.A."/>
        </authorList>
    </citation>
    <scope>CATALYTIC ACTIVITY</scope>
    <scope>SUBUNIT</scope>
    <scope>PATHWAY</scope>
    <scope>FUNCTION</scope>
</reference>
<reference key="12">
    <citation type="journal article" date="2013" name="J. Proteome Res.">
        <title>Toward a comprehensive characterization of a human cancer cell phosphoproteome.</title>
        <authorList>
            <person name="Zhou H."/>
            <person name="Di Palma S."/>
            <person name="Preisinger C."/>
            <person name="Peng M."/>
            <person name="Polat A.N."/>
            <person name="Heck A.J."/>
            <person name="Mohammed S."/>
        </authorList>
    </citation>
    <scope>PHOSPHORYLATION [LARGE SCALE ANALYSIS] AT SER-384</scope>
    <scope>IDENTIFICATION BY MASS SPECTROMETRY [LARGE SCALE ANALYSIS]</scope>
    <source>
        <tissue>Cervix carcinoma</tissue>
        <tissue>Erythroleukemia</tissue>
    </source>
</reference>
<reference key="13">
    <citation type="journal article" date="2017" name="Cell">
        <title>The U6 snRNA m(6)A methyltransferase METTL16 regulates SAM synthetase intron retention.</title>
        <authorList>
            <person name="Pendleton K.E."/>
            <person name="Chen B."/>
            <person name="Liu K."/>
            <person name="Hunter O.V."/>
            <person name="Xie Y."/>
            <person name="Tu B.P."/>
            <person name="Conrad N.K."/>
        </authorList>
    </citation>
    <scope>POST-TRANSCRIPTIONAL REGULATION</scope>
</reference>
<reference key="14">
    <citation type="journal article" date="2017" name="Cell Rep.">
        <title>S-Adenosylmethionine synthesis is regulated by selective N6-adenosine methylation and mRNA degradation involving METTL16 and YTHDC1.</title>
        <authorList>
            <person name="Shima H."/>
            <person name="Matsumoto M."/>
            <person name="Ishigami Y."/>
            <person name="Ebina M."/>
            <person name="Muto A."/>
            <person name="Sato Y."/>
            <person name="Kumagai S."/>
            <person name="Ochiai K."/>
            <person name="Suzuki T."/>
            <person name="Igarashi K."/>
        </authorList>
    </citation>
    <scope>POST-TRANSCRIPTIONAL REGULATION</scope>
</reference>
<reference key="15">
    <citation type="journal article" date="2017" name="Nat. Struct. Mol. Biol.">
        <title>Site-specific mapping of the human SUMO proteome reveals co-modification with phosphorylation.</title>
        <authorList>
            <person name="Hendriks I.A."/>
            <person name="Lyon D."/>
            <person name="Young C."/>
            <person name="Jensen L.J."/>
            <person name="Vertegaal A.C."/>
            <person name="Nielsen M.L."/>
        </authorList>
    </citation>
    <scope>SUMOYLATION [LARGE SCALE ANALYSIS] AT LYS-228 AND LYS-234</scope>
    <scope>IDENTIFICATION BY MASS SPECTROMETRY [LARGE SCALE ANALYSIS]</scope>
</reference>
<reference key="16">
    <citation type="journal article" date="2021" name="Cell">
        <title>Splice site m6A methylation prevents binding of U2AF35 to inhibit RNA splicing.</title>
        <authorList>
            <person name="Mendel M."/>
            <person name="Delaney K."/>
            <person name="Pandey R.R."/>
            <person name="Chen K.M."/>
            <person name="Wenda J.M."/>
            <person name="Vaagboe C.B."/>
            <person name="Steiner F.A."/>
            <person name="Homolka D."/>
            <person name="Pillai R.S."/>
        </authorList>
    </citation>
    <scope>POST-TRANSCRIPTIONAL REGULATION</scope>
</reference>
<reference key="17">
    <citation type="journal article" date="2013" name="Biochem. J.">
        <title>Insight into S-adenosylmethionine biosynthesis from the crystal structures of the human methionine adenosyltransferase catalytic and regulatory subunits.</title>
        <authorList>
            <person name="Shafqat N."/>
            <person name="Muniz J.R."/>
            <person name="Pilka E.S."/>
            <person name="Papagrigoriou E."/>
            <person name="von Delft F."/>
            <person name="Oppermann U."/>
            <person name="Yue W.W."/>
        </authorList>
    </citation>
    <scope>X-RAY CRYSTALLOGRAPHY (1.21 ANGSTROMS) IN COMPLEX WITH S-ADENOSYLMETHIONINE</scope>
</reference>
<reference key="18">
    <citation type="journal article" date="2014" name="IUCrJ">
        <title>Structure and function study of the complex that synthesizes S-adenosylmethionine.</title>
        <authorList>
            <person name="Murray B."/>
            <person name="Antonyuk S.V."/>
            <person name="Marina A."/>
            <person name="Van Liempd S.M."/>
            <person name="Lu S.C."/>
            <person name="Mato J.M."/>
            <person name="Hasnain S.S."/>
            <person name="Rojas A.L."/>
        </authorList>
    </citation>
    <scope>X-RAY CRYSTALLOGRAPHY (2.34 ANGSTROMS) IN COMPLEXES WITH ATP ANALOG; S-ADENOSYL-L-METHIONINE AND MAGNESIUM</scope>
    <scope>FUNCTION</scope>
    <scope>CATALYTIC ACTIVITY</scope>
    <scope>PATHWAY</scope>
    <scope>SUBUNIT</scope>
</reference>
<reference key="19">
    <citation type="journal article" date="2016" name="Proc. Natl. Acad. Sci. U.S.A.">
        <title>Crystallography captures catalytic steps in human methionine adenosyltransferase enzymes.</title>
        <authorList>
            <person name="Murray B."/>
            <person name="Antonyuk S.V."/>
            <person name="Marina A."/>
            <person name="Lu S.C."/>
            <person name="Mato J.M."/>
            <person name="Hasnain S.S."/>
            <person name="Rojas A.L."/>
        </authorList>
    </citation>
    <scope>X-RAY CRYSTALLOGRAPHY (1.09 ANGSTROMS) IN COMPLEXTES WITH ATP ANALOG; S-ADENOSYL-L-METHIONINE; MAGNESIUM AND POTASSIUM</scope>
    <scope>COFACTOR</scope>
</reference>
<dbReference type="EC" id="2.5.1.6" evidence="2 4 5"/>
<dbReference type="EMBL" id="X68836">
    <property type="protein sequence ID" value="CAA48726.1"/>
    <property type="molecule type" value="mRNA"/>
</dbReference>
<dbReference type="EMBL" id="DQ083239">
    <property type="protein sequence ID" value="AAY85355.1"/>
    <property type="molecule type" value="mRNA"/>
</dbReference>
<dbReference type="EMBL" id="AK291126">
    <property type="protein sequence ID" value="BAF83815.1"/>
    <property type="molecule type" value="mRNA"/>
</dbReference>
<dbReference type="EMBL" id="AK297758">
    <property type="protein sequence ID" value="BAG60107.1"/>
    <property type="molecule type" value="mRNA"/>
</dbReference>
<dbReference type="EMBL" id="AK316411">
    <property type="protein sequence ID" value="BAH14782.1"/>
    <property type="molecule type" value="mRNA"/>
</dbReference>
<dbReference type="EMBL" id="AC016753">
    <property type="protein sequence ID" value="AAY24339.1"/>
    <property type="molecule type" value="Genomic_DNA"/>
</dbReference>
<dbReference type="EMBL" id="CH471053">
    <property type="protein sequence ID" value="EAW99511.1"/>
    <property type="molecule type" value="Genomic_DNA"/>
</dbReference>
<dbReference type="EMBL" id="CH471053">
    <property type="protein sequence ID" value="EAW99513.1"/>
    <property type="molecule type" value="Genomic_DNA"/>
</dbReference>
<dbReference type="EMBL" id="BC001686">
    <property type="protein sequence ID" value="AAH01686.1"/>
    <property type="molecule type" value="mRNA"/>
</dbReference>
<dbReference type="EMBL" id="BC001854">
    <property type="protein sequence ID" value="AAH01854.1"/>
    <property type="molecule type" value="mRNA"/>
</dbReference>
<dbReference type="CCDS" id="CCDS1977.1">
    <molecule id="P31153-1"/>
</dbReference>
<dbReference type="PIR" id="S27257">
    <property type="entry name" value="S27257"/>
</dbReference>
<dbReference type="RefSeq" id="NP_005902.1">
    <molecule id="P31153-1"/>
    <property type="nucleotide sequence ID" value="NM_005911.6"/>
</dbReference>
<dbReference type="PDB" id="2P02">
    <property type="method" value="X-ray"/>
    <property type="resolution" value="1.21 A"/>
    <property type="chains" value="A=1-395"/>
</dbReference>
<dbReference type="PDB" id="4KTT">
    <property type="method" value="X-ray"/>
    <property type="resolution" value="2.59 A"/>
    <property type="chains" value="A/B/C/D=1-395"/>
</dbReference>
<dbReference type="PDB" id="4KTV">
    <property type="method" value="X-ray"/>
    <property type="resolution" value="3.30 A"/>
    <property type="chains" value="A/B/C/D=1-395"/>
</dbReference>
<dbReference type="PDB" id="4NDN">
    <property type="method" value="X-ray"/>
    <property type="resolution" value="2.34 A"/>
    <property type="chains" value="A/B/C/D=1-395"/>
</dbReference>
<dbReference type="PDB" id="5A19">
    <property type="method" value="X-ray"/>
    <property type="resolution" value="2.34 A"/>
    <property type="chains" value="A=1-395"/>
</dbReference>
<dbReference type="PDB" id="5A1G">
    <property type="method" value="X-ray"/>
    <property type="resolution" value="1.83 A"/>
    <property type="chains" value="A=1-395"/>
</dbReference>
<dbReference type="PDB" id="5A1I">
    <property type="method" value="X-ray"/>
    <property type="resolution" value="1.09 A"/>
    <property type="chains" value="A=1-395"/>
</dbReference>
<dbReference type="PDB" id="5UGH">
    <property type="method" value="X-ray"/>
    <property type="resolution" value="2.06 A"/>
    <property type="chains" value="A/B/C/D=1-395"/>
</dbReference>
<dbReference type="PDB" id="6FAJ">
    <property type="method" value="X-ray"/>
    <property type="resolution" value="1.95 A"/>
    <property type="chains" value="A/B=1-395"/>
</dbReference>
<dbReference type="PDB" id="6FBN">
    <property type="method" value="X-ray"/>
    <property type="resolution" value="2.70 A"/>
    <property type="chains" value="A/B=1-395"/>
</dbReference>
<dbReference type="PDB" id="6FBO">
    <property type="method" value="X-ray"/>
    <property type="resolution" value="1.80 A"/>
    <property type="chains" value="A=1-395"/>
</dbReference>
<dbReference type="PDB" id="6FBP">
    <property type="method" value="X-ray"/>
    <property type="resolution" value="1.65 A"/>
    <property type="chains" value="A/B=1-395"/>
</dbReference>
<dbReference type="PDB" id="6FCB">
    <property type="method" value="X-ray"/>
    <property type="resolution" value="2.70 A"/>
    <property type="chains" value="A=1-395"/>
</dbReference>
<dbReference type="PDB" id="6FCD">
    <property type="method" value="X-ray"/>
    <property type="resolution" value="1.70 A"/>
    <property type="chains" value="A=1-395"/>
</dbReference>
<dbReference type="PDB" id="6FWB">
    <property type="method" value="X-ray"/>
    <property type="resolution" value="1.79 A"/>
    <property type="chains" value="A/B/C/D=1-394"/>
</dbReference>
<dbReference type="PDB" id="6G6R">
    <property type="method" value="X-ray"/>
    <property type="resolution" value="1.35 A"/>
    <property type="chains" value="A=1-395"/>
</dbReference>
<dbReference type="PDB" id="6P9V">
    <property type="method" value="X-ray"/>
    <property type="resolution" value="2.05 A"/>
    <property type="chains" value="A=1-395"/>
</dbReference>
<dbReference type="PDB" id="6WKB">
    <property type="method" value="X-ray"/>
    <property type="resolution" value="2.55 A"/>
    <property type="chains" value="A/B=1-395"/>
</dbReference>
<dbReference type="PDB" id="7BHR">
    <property type="method" value="X-ray"/>
    <property type="resolution" value="1.08 A"/>
    <property type="chains" value="A=1-395"/>
</dbReference>
<dbReference type="PDB" id="7BHS">
    <property type="method" value="X-ray"/>
    <property type="resolution" value="1.05 A"/>
    <property type="chains" value="A=1-395"/>
</dbReference>
<dbReference type="PDB" id="7BHT">
    <property type="method" value="X-ray"/>
    <property type="resolution" value="1.05 A"/>
    <property type="chains" value="A=1-395"/>
</dbReference>
<dbReference type="PDB" id="7BHU">
    <property type="method" value="X-ray"/>
    <property type="resolution" value="1.15 A"/>
    <property type="chains" value="A=1-395"/>
</dbReference>
<dbReference type="PDB" id="7BHV">
    <property type="method" value="X-ray"/>
    <property type="resolution" value="1.16 A"/>
    <property type="chains" value="A=1-395"/>
</dbReference>
<dbReference type="PDB" id="7BHW">
    <property type="method" value="X-ray"/>
    <property type="resolution" value="1.15 A"/>
    <property type="chains" value="A=1-395"/>
</dbReference>
<dbReference type="PDB" id="7BHX">
    <property type="method" value="X-ray"/>
    <property type="resolution" value="1.08 A"/>
    <property type="chains" value="A=1-395"/>
</dbReference>
<dbReference type="PDB" id="7KCC">
    <property type="method" value="X-ray"/>
    <property type="resolution" value="1.32 A"/>
    <property type="chains" value="A=1-395"/>
</dbReference>
<dbReference type="PDB" id="7KCE">
    <property type="method" value="X-ray"/>
    <property type="resolution" value="1.14 A"/>
    <property type="chains" value="A=1-395"/>
</dbReference>
<dbReference type="PDB" id="7KCF">
    <property type="method" value="X-ray"/>
    <property type="resolution" value="1.10 A"/>
    <property type="chains" value="A=1-395"/>
</dbReference>
<dbReference type="PDB" id="7KDA">
    <property type="method" value="X-ray"/>
    <property type="resolution" value="1.24 A"/>
    <property type="chains" value="A=1-395"/>
</dbReference>
<dbReference type="PDB" id="7KDB">
    <property type="method" value="X-ray"/>
    <property type="resolution" value="1.24 A"/>
    <property type="chains" value="A=1-395"/>
</dbReference>
<dbReference type="PDB" id="7L1A">
    <property type="method" value="X-ray"/>
    <property type="resolution" value="1.25 A"/>
    <property type="chains" value="A=1-395"/>
</dbReference>
<dbReference type="PDB" id="7LNH">
    <property type="method" value="X-ray"/>
    <property type="resolution" value="2.50 A"/>
    <property type="chains" value="A/B=1-395"/>
</dbReference>
<dbReference type="PDB" id="7RW5">
    <property type="method" value="X-ray"/>
    <property type="resolution" value="2.48 A"/>
    <property type="chains" value="A/B/C/D=1-395"/>
</dbReference>
<dbReference type="PDB" id="7RW7">
    <property type="method" value="X-ray"/>
    <property type="resolution" value="1.19 A"/>
    <property type="chains" value="A=1-395"/>
</dbReference>
<dbReference type="PDB" id="7RWG">
    <property type="method" value="X-ray"/>
    <property type="resolution" value="0.97 A"/>
    <property type="chains" value="A=1-395"/>
</dbReference>
<dbReference type="PDB" id="7RWH">
    <property type="method" value="X-ray"/>
    <property type="resolution" value="1.17 A"/>
    <property type="chains" value="A=1-395"/>
</dbReference>
<dbReference type="PDB" id="7RXV">
    <property type="method" value="X-ray"/>
    <property type="resolution" value="1.07 A"/>
    <property type="chains" value="A=1-395"/>
</dbReference>
<dbReference type="PDB" id="7RXW">
    <property type="method" value="X-ray"/>
    <property type="resolution" value="1.07 A"/>
    <property type="chains" value="A=1-395"/>
</dbReference>
<dbReference type="PDB" id="7RXX">
    <property type="method" value="X-ray"/>
    <property type="resolution" value="1.25 A"/>
    <property type="chains" value="A=1-395"/>
</dbReference>
<dbReference type="PDB" id="8AXZ">
    <property type="method" value="X-ray"/>
    <property type="resolution" value="1.15 A"/>
    <property type="chains" value="A=1-395"/>
</dbReference>
<dbReference type="PDB" id="8OOG">
    <property type="method" value="X-ray"/>
    <property type="resolution" value="1.38 A"/>
    <property type="chains" value="A=1-395"/>
</dbReference>
<dbReference type="PDB" id="8P1T">
    <property type="method" value="X-ray"/>
    <property type="resolution" value="1.44 A"/>
    <property type="chains" value="AAA=2-395"/>
</dbReference>
<dbReference type="PDB" id="8P1V">
    <property type="method" value="X-ray"/>
    <property type="resolution" value="1.54 A"/>
    <property type="chains" value="AAA=2-395"/>
</dbReference>
<dbReference type="PDB" id="8P1W">
    <property type="method" value="X-ray"/>
    <property type="resolution" value="1.15 A"/>
    <property type="chains" value="AAA=2-395"/>
</dbReference>
<dbReference type="PDB" id="8P4H">
    <property type="method" value="X-ray"/>
    <property type="resolution" value="1.71 A"/>
    <property type="chains" value="A/B/C/D=2-395"/>
</dbReference>
<dbReference type="PDB" id="8QDY">
    <property type="method" value="X-ray"/>
    <property type="resolution" value="1.19 A"/>
    <property type="chains" value="A=1-395"/>
</dbReference>
<dbReference type="PDB" id="8QDZ">
    <property type="method" value="X-ray"/>
    <property type="resolution" value="1.16 A"/>
    <property type="chains" value="A=1-395"/>
</dbReference>
<dbReference type="PDB" id="8QE0">
    <property type="method" value="X-ray"/>
    <property type="resolution" value="1.12 A"/>
    <property type="chains" value="A=1-395"/>
</dbReference>
<dbReference type="PDB" id="8QE1">
    <property type="method" value="X-ray"/>
    <property type="resolution" value="1.09 A"/>
    <property type="chains" value="A=1-395"/>
</dbReference>
<dbReference type="PDB" id="8QE2">
    <property type="method" value="X-ray"/>
    <property type="resolution" value="1.11 A"/>
    <property type="chains" value="A=1-395"/>
</dbReference>
<dbReference type="PDB" id="8QE3">
    <property type="method" value="X-ray"/>
    <property type="resolution" value="1.09 A"/>
    <property type="chains" value="A=1-395"/>
</dbReference>
<dbReference type="PDB" id="8XAM">
    <property type="method" value="X-ray"/>
    <property type="resolution" value="1.30 A"/>
    <property type="chains" value="A/B=16-395"/>
</dbReference>
<dbReference type="PDB" id="8XAR">
    <property type="method" value="X-ray"/>
    <property type="resolution" value="1.19 A"/>
    <property type="chains" value="A=1-395"/>
</dbReference>
<dbReference type="PDB" id="8XB0">
    <property type="method" value="X-ray"/>
    <property type="resolution" value="1.12 A"/>
    <property type="chains" value="A=1-395"/>
</dbReference>
<dbReference type="PDB" id="8XJ2">
    <property type="method" value="EM"/>
    <property type="resolution" value="3.16 A"/>
    <property type="chains" value="A/B/C/D=1-395"/>
</dbReference>
<dbReference type="PDBsum" id="2P02"/>
<dbReference type="PDBsum" id="4KTT"/>
<dbReference type="PDBsum" id="4KTV"/>
<dbReference type="PDBsum" id="4NDN"/>
<dbReference type="PDBsum" id="5A19"/>
<dbReference type="PDBsum" id="5A1G"/>
<dbReference type="PDBsum" id="5A1I"/>
<dbReference type="PDBsum" id="5UGH"/>
<dbReference type="PDBsum" id="6FAJ"/>
<dbReference type="PDBsum" id="6FBN"/>
<dbReference type="PDBsum" id="6FBO"/>
<dbReference type="PDBsum" id="6FBP"/>
<dbReference type="PDBsum" id="6FCB"/>
<dbReference type="PDBsum" id="6FCD"/>
<dbReference type="PDBsum" id="6FWB"/>
<dbReference type="PDBsum" id="6G6R"/>
<dbReference type="PDBsum" id="6P9V"/>
<dbReference type="PDBsum" id="6WKB"/>
<dbReference type="PDBsum" id="7BHR"/>
<dbReference type="PDBsum" id="7BHS"/>
<dbReference type="PDBsum" id="7BHT"/>
<dbReference type="PDBsum" id="7BHU"/>
<dbReference type="PDBsum" id="7BHV"/>
<dbReference type="PDBsum" id="7BHW"/>
<dbReference type="PDBsum" id="7BHX"/>
<dbReference type="PDBsum" id="7KCC"/>
<dbReference type="PDBsum" id="7KCE"/>
<dbReference type="PDBsum" id="7KCF"/>
<dbReference type="PDBsum" id="7KDA"/>
<dbReference type="PDBsum" id="7KDB"/>
<dbReference type="PDBsum" id="7L1A"/>
<dbReference type="PDBsum" id="7LNH"/>
<dbReference type="PDBsum" id="7RW5"/>
<dbReference type="PDBsum" id="7RW7"/>
<dbReference type="PDBsum" id="7RWG"/>
<dbReference type="PDBsum" id="7RWH"/>
<dbReference type="PDBsum" id="7RXV"/>
<dbReference type="PDBsum" id="7RXW"/>
<dbReference type="PDBsum" id="7RXX"/>
<dbReference type="PDBsum" id="8AXZ"/>
<dbReference type="PDBsum" id="8OOG"/>
<dbReference type="PDBsum" id="8P1T"/>
<dbReference type="PDBsum" id="8P1V"/>
<dbReference type="PDBsum" id="8P1W"/>
<dbReference type="PDBsum" id="8P4H"/>
<dbReference type="PDBsum" id="8QDY"/>
<dbReference type="PDBsum" id="8QDZ"/>
<dbReference type="PDBsum" id="8QE0"/>
<dbReference type="PDBsum" id="8QE1"/>
<dbReference type="PDBsum" id="8QE2"/>
<dbReference type="PDBsum" id="8QE3"/>
<dbReference type="PDBsum" id="8XAM"/>
<dbReference type="PDBsum" id="8XAR"/>
<dbReference type="PDBsum" id="8XB0"/>
<dbReference type="PDBsum" id="8XJ2"/>
<dbReference type="EMDB" id="EMD-38392"/>
<dbReference type="SMR" id="P31153"/>
<dbReference type="BioGRID" id="110314">
    <property type="interactions" value="229"/>
</dbReference>
<dbReference type="ComplexPortal" id="CPX-948">
    <property type="entry name" value="S-adenosylmethionine synthase, MAT2A-MAT2B variant"/>
</dbReference>
<dbReference type="CORUM" id="P31153"/>
<dbReference type="FunCoup" id="P31153">
    <property type="interactions" value="1265"/>
</dbReference>
<dbReference type="IntAct" id="P31153">
    <property type="interactions" value="86"/>
</dbReference>
<dbReference type="MINT" id="P31153"/>
<dbReference type="STRING" id="9606.ENSP00000303147"/>
<dbReference type="BindingDB" id="P31153"/>
<dbReference type="ChEMBL" id="CHEMBL3313835"/>
<dbReference type="DrugBank" id="DB00118">
    <property type="generic name" value="Ademetionine"/>
</dbReference>
<dbReference type="DrugBank" id="DB00134">
    <property type="generic name" value="Methionine"/>
</dbReference>
<dbReference type="GlyGen" id="P31153">
    <property type="glycosylation" value="3 sites, 1 O-linked glycan (3 sites)"/>
</dbReference>
<dbReference type="iPTMnet" id="P31153"/>
<dbReference type="MetOSite" id="P31153"/>
<dbReference type="PhosphoSitePlus" id="P31153"/>
<dbReference type="SwissPalm" id="P31153"/>
<dbReference type="BioMuta" id="MAT2A"/>
<dbReference type="DMDM" id="400245"/>
<dbReference type="REPRODUCTION-2DPAGE" id="IPI00010157"/>
<dbReference type="CPTAC" id="CPTAC-234"/>
<dbReference type="CPTAC" id="CPTAC-235"/>
<dbReference type="jPOST" id="P31153"/>
<dbReference type="MassIVE" id="P31153"/>
<dbReference type="PaxDb" id="9606-ENSP00000303147"/>
<dbReference type="PeptideAtlas" id="P31153"/>
<dbReference type="ProteomicsDB" id="4670"/>
<dbReference type="ProteomicsDB" id="54763">
    <molecule id="P31153-1"/>
</dbReference>
<dbReference type="Pumba" id="P31153"/>
<dbReference type="Antibodypedia" id="31867">
    <property type="antibodies" value="370 antibodies from 32 providers"/>
</dbReference>
<dbReference type="DNASU" id="4144"/>
<dbReference type="Ensembl" id="ENST00000306434.8">
    <molecule id="P31153-1"/>
    <property type="protein sequence ID" value="ENSP00000303147.3"/>
    <property type="gene ID" value="ENSG00000168906.13"/>
</dbReference>
<dbReference type="Ensembl" id="ENST00000409017.1">
    <molecule id="P31153-2"/>
    <property type="protein sequence ID" value="ENSP00000386353.1"/>
    <property type="gene ID" value="ENSG00000168906.13"/>
</dbReference>
<dbReference type="GeneID" id="4144"/>
<dbReference type="KEGG" id="hsa:4144"/>
<dbReference type="MANE-Select" id="ENST00000306434.8">
    <property type="protein sequence ID" value="ENSP00000303147.3"/>
    <property type="RefSeq nucleotide sequence ID" value="NM_005911.6"/>
    <property type="RefSeq protein sequence ID" value="NP_005902.1"/>
</dbReference>
<dbReference type="UCSC" id="uc002spr.4">
    <molecule id="P31153-1"/>
    <property type="organism name" value="human"/>
</dbReference>
<dbReference type="AGR" id="HGNC:6904"/>
<dbReference type="CTD" id="4144"/>
<dbReference type="DisGeNET" id="4144"/>
<dbReference type="GeneCards" id="MAT2A"/>
<dbReference type="HGNC" id="HGNC:6904">
    <property type="gene designation" value="MAT2A"/>
</dbReference>
<dbReference type="HPA" id="ENSG00000168906">
    <property type="expression patterns" value="Tissue enhanced (pancreas)"/>
</dbReference>
<dbReference type="MalaCards" id="MAT2A"/>
<dbReference type="MIM" id="601468">
    <property type="type" value="gene"/>
</dbReference>
<dbReference type="neXtProt" id="NX_P31153"/>
<dbReference type="OpenTargets" id="ENSG00000168906"/>
<dbReference type="Orphanet" id="91387">
    <property type="disease" value="Familial thoracic aortic aneurysm and aortic dissection"/>
</dbReference>
<dbReference type="PharmGKB" id="PA30647"/>
<dbReference type="VEuPathDB" id="HostDB:ENSG00000168906"/>
<dbReference type="eggNOG" id="KOG1506">
    <property type="taxonomic scope" value="Eukaryota"/>
</dbReference>
<dbReference type="GeneTree" id="ENSGT00950000183185"/>
<dbReference type="HOGENOM" id="CLU_041802_0_1_1"/>
<dbReference type="InParanoid" id="P31153"/>
<dbReference type="OMA" id="ASYMARY"/>
<dbReference type="OrthoDB" id="5852090at2759"/>
<dbReference type="PAN-GO" id="P31153">
    <property type="GO annotations" value="4 GO annotations based on evolutionary models"/>
</dbReference>
<dbReference type="PhylomeDB" id="P31153"/>
<dbReference type="TreeFam" id="TF300511"/>
<dbReference type="BioCyc" id="MetaCyc:HS09847-MONOMER"/>
<dbReference type="BRENDA" id="2.5.1.6">
    <property type="organism ID" value="2681"/>
</dbReference>
<dbReference type="PathwayCommons" id="P31153"/>
<dbReference type="Reactome" id="R-HSA-156581">
    <property type="pathway name" value="Methylation"/>
</dbReference>
<dbReference type="SignaLink" id="P31153"/>
<dbReference type="UniPathway" id="UPA00315">
    <property type="reaction ID" value="UER00080"/>
</dbReference>
<dbReference type="BioGRID-ORCS" id="4144">
    <property type="hits" value="809 hits in 1171 CRISPR screens"/>
</dbReference>
<dbReference type="CD-CODE" id="91857CE7">
    <property type="entry name" value="Nucleolus"/>
</dbReference>
<dbReference type="ChiTaRS" id="MAT2A">
    <property type="organism name" value="human"/>
</dbReference>
<dbReference type="EvolutionaryTrace" id="P31153"/>
<dbReference type="GenomeRNAi" id="4144"/>
<dbReference type="Pharos" id="P31153">
    <property type="development level" value="Tchem"/>
</dbReference>
<dbReference type="PRO" id="PR:P31153"/>
<dbReference type="Proteomes" id="UP000005640">
    <property type="component" value="Chromosome 2"/>
</dbReference>
<dbReference type="RNAct" id="P31153">
    <property type="molecule type" value="protein"/>
</dbReference>
<dbReference type="Bgee" id="ENSG00000168906">
    <property type="expression patterns" value="Expressed in body of pancreas and 209 other cell types or tissues"/>
</dbReference>
<dbReference type="ExpressionAtlas" id="P31153">
    <property type="expression patterns" value="baseline and differential"/>
</dbReference>
<dbReference type="GO" id="GO:0005829">
    <property type="term" value="C:cytosol"/>
    <property type="evidence" value="ECO:0000318"/>
    <property type="project" value="GO_Central"/>
</dbReference>
<dbReference type="GO" id="GO:0048269">
    <property type="term" value="C:methionine adenosyltransferase complex"/>
    <property type="evidence" value="ECO:0000314"/>
    <property type="project" value="UniProtKB"/>
</dbReference>
<dbReference type="GO" id="GO:0005524">
    <property type="term" value="F:ATP binding"/>
    <property type="evidence" value="ECO:0007669"/>
    <property type="project" value="UniProtKB-KW"/>
</dbReference>
<dbReference type="GO" id="GO:0042802">
    <property type="term" value="F:identical protein binding"/>
    <property type="evidence" value="ECO:0000353"/>
    <property type="project" value="IntAct"/>
</dbReference>
<dbReference type="GO" id="GO:0046872">
    <property type="term" value="F:metal ion binding"/>
    <property type="evidence" value="ECO:0007669"/>
    <property type="project" value="UniProtKB-KW"/>
</dbReference>
<dbReference type="GO" id="GO:0004478">
    <property type="term" value="F:methionine adenosyltransferase activity"/>
    <property type="evidence" value="ECO:0000314"/>
    <property type="project" value="UniProtKB"/>
</dbReference>
<dbReference type="GO" id="GO:0036094">
    <property type="term" value="F:small molecule binding"/>
    <property type="evidence" value="ECO:0000269"/>
    <property type="project" value="DisProt"/>
</dbReference>
<dbReference type="GO" id="GO:1990830">
    <property type="term" value="P:cellular response to leukemia inhibitory factor"/>
    <property type="evidence" value="ECO:0007669"/>
    <property type="project" value="Ensembl"/>
</dbReference>
<dbReference type="GO" id="GO:0061431">
    <property type="term" value="P:cellular response to methionine"/>
    <property type="evidence" value="ECO:0000314"/>
    <property type="project" value="UniProt"/>
</dbReference>
<dbReference type="GO" id="GO:0006730">
    <property type="term" value="P:one-carbon metabolic process"/>
    <property type="evidence" value="ECO:0007669"/>
    <property type="project" value="UniProtKB-KW"/>
</dbReference>
<dbReference type="GO" id="GO:1904263">
    <property type="term" value="P:positive regulation of TORC1 signaling"/>
    <property type="evidence" value="ECO:0000314"/>
    <property type="project" value="UniProt"/>
</dbReference>
<dbReference type="GO" id="GO:0051291">
    <property type="term" value="P:protein heterooligomerization"/>
    <property type="evidence" value="ECO:0000314"/>
    <property type="project" value="UniProtKB"/>
</dbReference>
<dbReference type="GO" id="GO:0034214">
    <property type="term" value="P:protein hexamerization"/>
    <property type="evidence" value="ECO:0000314"/>
    <property type="project" value="UniProtKB"/>
</dbReference>
<dbReference type="GO" id="GO:0006556">
    <property type="term" value="P:S-adenosylmethionine biosynthetic process"/>
    <property type="evidence" value="ECO:0000314"/>
    <property type="project" value="UniProtKB"/>
</dbReference>
<dbReference type="CDD" id="cd18079">
    <property type="entry name" value="S-AdoMet_synt"/>
    <property type="match status" value="1"/>
</dbReference>
<dbReference type="DisProt" id="DP02825"/>
<dbReference type="FunFam" id="3.30.300.10:FF:000001">
    <property type="entry name" value="S-adenosylmethionine synthase"/>
    <property type="match status" value="1"/>
</dbReference>
<dbReference type="FunFam" id="3.30.300.10:FF:000003">
    <property type="entry name" value="S-adenosylmethionine synthase"/>
    <property type="match status" value="1"/>
</dbReference>
<dbReference type="FunFam" id="3.30.300.10:FF:000004">
    <property type="entry name" value="S-adenosylmethionine synthase"/>
    <property type="match status" value="1"/>
</dbReference>
<dbReference type="Gene3D" id="3.30.300.10">
    <property type="match status" value="3"/>
</dbReference>
<dbReference type="HAMAP" id="MF_00086">
    <property type="entry name" value="S_AdoMet_synth1"/>
    <property type="match status" value="1"/>
</dbReference>
<dbReference type="InterPro" id="IPR022631">
    <property type="entry name" value="ADOMET_SYNTHASE_CS"/>
</dbReference>
<dbReference type="InterPro" id="IPR022630">
    <property type="entry name" value="S-AdoMet_synt_C"/>
</dbReference>
<dbReference type="InterPro" id="IPR022629">
    <property type="entry name" value="S-AdoMet_synt_central"/>
</dbReference>
<dbReference type="InterPro" id="IPR022628">
    <property type="entry name" value="S-AdoMet_synt_N"/>
</dbReference>
<dbReference type="InterPro" id="IPR002133">
    <property type="entry name" value="S-AdoMet_synthetase"/>
</dbReference>
<dbReference type="InterPro" id="IPR022636">
    <property type="entry name" value="S-AdoMet_synthetase_sfam"/>
</dbReference>
<dbReference type="NCBIfam" id="TIGR01034">
    <property type="entry name" value="metK"/>
    <property type="match status" value="1"/>
</dbReference>
<dbReference type="PANTHER" id="PTHR11964">
    <property type="entry name" value="S-ADENOSYLMETHIONINE SYNTHETASE"/>
    <property type="match status" value="1"/>
</dbReference>
<dbReference type="Pfam" id="PF02773">
    <property type="entry name" value="S-AdoMet_synt_C"/>
    <property type="match status" value="1"/>
</dbReference>
<dbReference type="Pfam" id="PF02772">
    <property type="entry name" value="S-AdoMet_synt_M"/>
    <property type="match status" value="1"/>
</dbReference>
<dbReference type="Pfam" id="PF00438">
    <property type="entry name" value="S-AdoMet_synt_N"/>
    <property type="match status" value="1"/>
</dbReference>
<dbReference type="PIRSF" id="PIRSF000497">
    <property type="entry name" value="MAT"/>
    <property type="match status" value="1"/>
</dbReference>
<dbReference type="SUPFAM" id="SSF55973">
    <property type="entry name" value="S-adenosylmethionine synthetase"/>
    <property type="match status" value="3"/>
</dbReference>
<dbReference type="PROSITE" id="PS00376">
    <property type="entry name" value="ADOMET_SYNTHASE_1"/>
    <property type="match status" value="1"/>
</dbReference>
<dbReference type="PROSITE" id="PS00377">
    <property type="entry name" value="ADOMET_SYNTHASE_2"/>
    <property type="match status" value="1"/>
</dbReference>
<proteinExistence type="evidence at protein level"/>
<sequence>MNGQLNGFHEAFIEEGTFLFTSESVGEGHPDKICDQISDAVLDAHLQQDPDAKVACETVAKTGMILLAGEITSRAAVDYQKVVREAVKHIGYDDSSKGFDYKTCNVLVALEQQSPDIAQGVHLDRNEEDIGAGDQGLMFGYATDETEECMPLTIVLAHKLNAKLAELRRNGTLPWLRPDSKTQVTVQYMQDRGAVLPIRVHTIVISVQHDEEVCLDEMRDALKEKVIKAVVPAKYLDEDTIYHLQPSGRFVIGGPQGDAGLTGRKIIVDTYGGWGAHGGGAFSGKDYTKVDRSAAYAARWVAKSLVKGGLCRRVLVQVSYAIGVSHPLSISIFHYGTSQKSERELLEIVKKNFDLRPGVIVRDLDLKKPIYQRTAAYGHFGRDSFPWEVPKKLKY</sequence>
<keyword id="KW-0002">3D-structure</keyword>
<keyword id="KW-0007">Acetylation</keyword>
<keyword id="KW-0025">Alternative splicing</keyword>
<keyword id="KW-0067">ATP-binding</keyword>
<keyword id="KW-1017">Isopeptide bond</keyword>
<keyword id="KW-0460">Magnesium</keyword>
<keyword id="KW-0479">Metal-binding</keyword>
<keyword id="KW-0547">Nucleotide-binding</keyword>
<keyword id="KW-0554">One-carbon metabolism</keyword>
<keyword id="KW-0597">Phosphoprotein</keyword>
<keyword id="KW-0630">Potassium</keyword>
<keyword id="KW-1267">Proteomics identification</keyword>
<keyword id="KW-1185">Reference proteome</keyword>
<keyword id="KW-0808">Transferase</keyword>
<keyword id="KW-0832">Ubl conjugation</keyword>
<comment type="function">
    <text evidence="2 4 5">Catalyzes the formation of S-adenosylmethionine from methionine and ATP. The reaction comprises two steps that are both catalyzed by the same enzyme: formation of S-adenosylmethionine (AdoMet) and triphosphate, and subsequent hydrolysis of the triphosphate.</text>
</comment>
<comment type="catalytic activity">
    <reaction evidence="2 4 5">
        <text>L-methionine + ATP + H2O = S-adenosyl-L-methionine + phosphate + diphosphate</text>
        <dbReference type="Rhea" id="RHEA:21080"/>
        <dbReference type="ChEBI" id="CHEBI:15377"/>
        <dbReference type="ChEBI" id="CHEBI:30616"/>
        <dbReference type="ChEBI" id="CHEBI:33019"/>
        <dbReference type="ChEBI" id="CHEBI:43474"/>
        <dbReference type="ChEBI" id="CHEBI:57844"/>
        <dbReference type="ChEBI" id="CHEBI:59789"/>
        <dbReference type="EC" id="2.5.1.6"/>
    </reaction>
</comment>
<comment type="cofactor">
    <cofactor evidence="1">
        <name>Mg(2+)</name>
        <dbReference type="ChEBI" id="CHEBI:18420"/>
    </cofactor>
    <text evidence="5 6">Binds 2 magnesium ions per subunit. The magnesium ions interact primarily with the substrate.</text>
</comment>
<comment type="cofactor">
    <cofactor evidence="1">
        <name>K(+)</name>
        <dbReference type="ChEBI" id="CHEBI:29103"/>
    </cofactor>
    <text evidence="6">Binds 1 potassium ion per subunit. The potassium ion interacts primarily with the substrate.</text>
</comment>
<comment type="pathway">
    <text evidence="2 4 5">Amino-acid biosynthesis; S-adenosyl-L-methionine biosynthesis; S-adenosyl-L-methionine from L-methionine: step 1/1.</text>
</comment>
<comment type="subunit">
    <text evidence="2 5 13">Heterotrimer; composed of a catalytic MAT2A homodimer that binds one regulatory MAT2B chain (PubMed:10644686, PubMed:23189196). Heterohexamer; composed of a central, catalytic MAT2A homotetramer flanked on either side by a regulatory MAT2B chain (PubMed:25075345).</text>
</comment>
<comment type="interaction">
    <interactant intactId="EBI-1050743">
        <id>P31153</id>
    </interactant>
    <interactant intactId="EBI-18924329">
        <id>Q96IK1-2</id>
        <label>BOD1</label>
    </interactant>
    <organismsDiffer>false</organismsDiffer>
    <experiments>3</experiments>
</comment>
<comment type="interaction">
    <interactant intactId="EBI-1050743">
        <id>P31153</id>
    </interactant>
    <interactant intactId="EBI-3920838">
        <id>Q96NX5</id>
        <label>CAMK1G</label>
    </interactant>
    <organismsDiffer>false</organismsDiffer>
    <experiments>3</experiments>
</comment>
<comment type="interaction">
    <interactant intactId="EBI-1050743">
        <id>P31153</id>
    </interactant>
    <interactant intactId="EBI-49119542">
        <id>Q6ZP82-1</id>
        <label>CCDC141</label>
    </interactant>
    <organismsDiffer>false</organismsDiffer>
    <experiments>3</experiments>
</comment>
<comment type="interaction">
    <interactant intactId="EBI-1050743">
        <id>P31153</id>
    </interactant>
    <interactant intactId="EBI-2872414">
        <id>Q8IUI8</id>
        <label>CRLF3</label>
    </interactant>
    <organismsDiffer>false</organismsDiffer>
    <experiments>3</experiments>
</comment>
<comment type="interaction">
    <interactant intactId="EBI-1050743">
        <id>P31153</id>
    </interactant>
    <interactant intactId="EBI-3893327">
        <id>Q6P1L5</id>
        <label>FAM117B</label>
    </interactant>
    <organismsDiffer>false</organismsDiffer>
    <experiments>3</experiments>
</comment>
<comment type="interaction">
    <interactant intactId="EBI-1050743">
        <id>P31153</id>
    </interactant>
    <interactant intactId="EBI-9090198">
        <id>P15976-2</id>
        <label>GATA1</label>
    </interactant>
    <organismsDiffer>false</organismsDiffer>
    <experiments>3</experiments>
</comment>
<comment type="interaction">
    <interactant intactId="EBI-1050743">
        <id>P31153</id>
    </interactant>
    <interactant intactId="EBI-12823003">
        <id>P80217-2</id>
        <label>IFI35</label>
    </interactant>
    <organismsDiffer>false</organismsDiffer>
    <experiments>3</experiments>
</comment>
<comment type="interaction">
    <interactant intactId="EBI-1050743">
        <id>P31153</id>
    </interactant>
    <interactant intactId="EBI-742916">
        <id>Q8WZ19</id>
        <label>KCTD13</label>
    </interactant>
    <organismsDiffer>false</organismsDiffer>
    <experiments>3</experiments>
</comment>
<comment type="interaction">
    <interactant intactId="EBI-1050743">
        <id>P31153</id>
    </interactant>
    <interactant intactId="EBI-2796400">
        <id>Q9UIH9</id>
        <label>KLF15</label>
    </interactant>
    <organismsDiffer>false</organismsDiffer>
    <experiments>3</experiments>
</comment>
<comment type="interaction">
    <interactant intactId="EBI-1050743">
        <id>P31153</id>
    </interactant>
    <interactant intactId="EBI-967087">
        <id>Q00266</id>
        <label>MAT1A</label>
    </interactant>
    <organismsDiffer>false</organismsDiffer>
    <experiments>9</experiments>
</comment>
<comment type="interaction">
    <interactant intactId="EBI-1050743">
        <id>P31153</id>
    </interactant>
    <interactant intactId="EBI-1050743">
        <id>P31153</id>
        <label>MAT2A</label>
    </interactant>
    <organismsDiffer>false</organismsDiffer>
    <experiments>8</experiments>
</comment>
<comment type="interaction">
    <interactant intactId="EBI-1050743">
        <id>P31153</id>
    </interactant>
    <interactant intactId="EBI-10317491">
        <id>Q9NZL9</id>
        <label>MAT2B</label>
    </interactant>
    <organismsDiffer>false</organismsDiffer>
    <experiments>5</experiments>
</comment>
<comment type="interaction">
    <interactant intactId="EBI-1050743">
        <id>P31153</id>
    </interactant>
    <interactant intactId="EBI-996616">
        <id>P02795</id>
        <label>MT2A</label>
    </interactant>
    <organismsDiffer>false</organismsDiffer>
    <experiments>3</experiments>
</comment>
<comment type="interaction">
    <interactant intactId="EBI-1050743">
        <id>P31153</id>
    </interactant>
    <interactant intactId="EBI-1043580">
        <id>Q9BRX2</id>
        <label>PELO</label>
    </interactant>
    <organismsDiffer>false</organismsDiffer>
    <experiments>3</experiments>
</comment>
<comment type="interaction">
    <interactant intactId="EBI-1050743">
        <id>P31153</id>
    </interactant>
    <interactant intactId="EBI-741137">
        <id>O43663</id>
        <label>PRC1</label>
    </interactant>
    <organismsDiffer>false</organismsDiffer>
    <experiments>3</experiments>
</comment>
<comment type="interaction">
    <interactant intactId="EBI-1050743">
        <id>P31153</id>
    </interactant>
    <interactant intactId="EBI-1053424">
        <id>O43741</id>
        <label>PRKAB2</label>
    </interactant>
    <organismsDiffer>false</organismsDiffer>
    <experiments>3</experiments>
</comment>
<comment type="interaction">
    <interactant intactId="EBI-1050743">
        <id>P31153</id>
    </interactant>
    <interactant intactId="EBI-741332">
        <id>P57052</id>
        <label>RBM11</label>
    </interactant>
    <organismsDiffer>false</organismsDiffer>
    <experiments>3</experiments>
</comment>
<comment type="interaction">
    <interactant intactId="EBI-1050743">
        <id>P31153</id>
    </interactant>
    <interactant intactId="EBI-752324">
        <id>Q8N488</id>
        <label>RYBP</label>
    </interactant>
    <organismsDiffer>false</organismsDiffer>
    <experiments>3</experiments>
</comment>
<comment type="interaction">
    <interactant intactId="EBI-1050743">
        <id>P31153</id>
    </interactant>
    <interactant intactId="EBI-12832276">
        <id>P08195-4</id>
        <label>SLC3A2</label>
    </interactant>
    <organismsDiffer>false</organismsDiffer>
    <experiments>3</experiments>
</comment>
<comment type="interaction">
    <interactant intactId="EBI-1050743">
        <id>P31153</id>
    </interactant>
    <interactant intactId="EBI-632715">
        <id>Q13573</id>
        <label>SNW1</label>
    </interactant>
    <organismsDiffer>false</organismsDiffer>
    <experiments>3</experiments>
</comment>
<comment type="interaction">
    <interactant intactId="EBI-1050743">
        <id>P31153</id>
    </interactant>
    <interactant intactId="EBI-12041693">
        <id>Q86W54-2</id>
        <label>SPATA24</label>
    </interactant>
    <organismsDiffer>false</organismsDiffer>
    <experiments>3</experiments>
</comment>
<comment type="interaction">
    <interactant intactId="EBI-1050743">
        <id>P31153</id>
    </interactant>
    <interactant intactId="EBI-12949277">
        <id>O95789-4</id>
        <label>ZMYM6</label>
    </interactant>
    <organismsDiffer>false</organismsDiffer>
    <experiments>3</experiments>
</comment>
<comment type="alternative products">
    <event type="alternative splicing"/>
    <isoform>
        <id>P31153-1</id>
        <name>1</name>
        <sequence type="displayed"/>
    </isoform>
    <isoform>
        <id>P31153-2</id>
        <name>2</name>
        <sequence type="described" ref="VSP_056186 VSP_056187"/>
    </isoform>
</comment>
<comment type="tissue specificity">
    <text evidence="3">Detected in kidney.</text>
</comment>
<comment type="miscellaneous">
    <text evidence="7 8 9">Protein expression is regulated by post-transcriptional regulation: in presence of S-adenosyl-L-methionine, METTL16 binds and methylates the first hairpin of the 3'-UTR region of MAT2A mRNA, preventing recognition of their 3'-splice site by U2AF1/U2AF35, thereby inhibiting splicing and protein production of S-adenosylmethionine synthase (PubMed:28525753, PubMed:29262316, PubMed:33930289). In S-adenosyl-L-methionine-limiting conditions, METTL16 binds the 3'-UTR region of MAT2A mRNA without methylating it due to the lack of a methyl donor, preventing N6-methylation and promoting expression of MAT2A (PubMed:28525753).</text>
</comment>
<comment type="similarity">
    <text evidence="12">Belongs to the AdoMet synthase family.</text>
</comment>
<evidence type="ECO:0000250" key="1">
    <source>
        <dbReference type="UniProtKB" id="P0A817"/>
    </source>
</evidence>
<evidence type="ECO:0000269" key="2">
    <source>
    </source>
</evidence>
<evidence type="ECO:0000269" key="3">
    <source>
    </source>
</evidence>
<evidence type="ECO:0000269" key="4">
    <source>
    </source>
</evidence>
<evidence type="ECO:0000269" key="5">
    <source>
    </source>
</evidence>
<evidence type="ECO:0000269" key="6">
    <source>
    </source>
</evidence>
<evidence type="ECO:0000269" key="7">
    <source>
    </source>
</evidence>
<evidence type="ECO:0000269" key="8">
    <source>
    </source>
</evidence>
<evidence type="ECO:0000269" key="9">
    <source>
    </source>
</evidence>
<evidence type="ECO:0000303" key="10">
    <source>
    </source>
</evidence>
<evidence type="ECO:0000303" key="11">
    <source>
    </source>
</evidence>
<evidence type="ECO:0000305" key="12"/>
<evidence type="ECO:0000305" key="13">
    <source>
    </source>
</evidence>
<evidence type="ECO:0000305" key="14">
    <source>
    </source>
</evidence>
<evidence type="ECO:0000305" key="15">
    <source>
    </source>
</evidence>
<evidence type="ECO:0007744" key="16">
    <source>
        <dbReference type="PDB" id="4KTT"/>
    </source>
</evidence>
<evidence type="ECO:0007744" key="17">
    <source>
        <dbReference type="PDB" id="4NDN"/>
    </source>
</evidence>
<evidence type="ECO:0007744" key="18">
    <source>
        <dbReference type="PDB" id="5A19"/>
    </source>
</evidence>
<evidence type="ECO:0007744" key="19">
    <source>
        <dbReference type="PDB" id="5A1G"/>
    </source>
</evidence>
<evidence type="ECO:0007744" key="20">
    <source>
        <dbReference type="PDB" id="5A1I"/>
    </source>
</evidence>
<evidence type="ECO:0007744" key="21">
    <source>
    </source>
</evidence>
<evidence type="ECO:0007744" key="22">
    <source>
    </source>
</evidence>
<evidence type="ECO:0007744" key="23">
    <source>
    </source>
</evidence>
<evidence type="ECO:0007744" key="24">
    <source>
    </source>
</evidence>
<evidence type="ECO:0007829" key="25">
    <source>
        <dbReference type="PDB" id="4NDN"/>
    </source>
</evidence>
<evidence type="ECO:0007829" key="26">
    <source>
        <dbReference type="PDB" id="6FAJ"/>
    </source>
</evidence>
<evidence type="ECO:0007829" key="27">
    <source>
        <dbReference type="PDB" id="6FBP"/>
    </source>
</evidence>
<evidence type="ECO:0007829" key="28">
    <source>
        <dbReference type="PDB" id="7BHS"/>
    </source>
</evidence>
<evidence type="ECO:0007829" key="29">
    <source>
        <dbReference type="PDB" id="7LNH"/>
    </source>
</evidence>
<evidence type="ECO:0007829" key="30">
    <source>
        <dbReference type="PDB" id="7RWG"/>
    </source>
</evidence>
<evidence type="ECO:0007829" key="31">
    <source>
        <dbReference type="PDB" id="8P4H"/>
    </source>
</evidence>